<name>RK2_SOLLC</name>
<geneLocation type="chloroplast"/>
<comment type="subunit">
    <text evidence="1">Part of the 50S ribosomal subunit.</text>
</comment>
<comment type="subcellular location">
    <subcellularLocation>
        <location>Plastid</location>
        <location>Chloroplast</location>
    </subcellularLocation>
</comment>
<comment type="similarity">
    <text evidence="4">Belongs to the universal ribosomal protein uL2 family.</text>
</comment>
<dbReference type="EMBL" id="DQ347959">
    <property type="protein sequence ID" value="ABC56341.1"/>
    <property type="molecule type" value="Genomic_DNA"/>
</dbReference>
<dbReference type="EMBL" id="DQ347959">
    <property type="protein sequence ID" value="ABC56366.1"/>
    <property type="molecule type" value="Genomic_DNA"/>
</dbReference>
<dbReference type="EMBL" id="AM087200">
    <property type="protein sequence ID" value="CAJ32435.1"/>
    <property type="molecule type" value="Genomic_DNA"/>
</dbReference>
<dbReference type="EMBL" id="AM087200">
    <property type="protein sequence ID" value="CAJ32459.1"/>
    <property type="molecule type" value="Genomic_DNA"/>
</dbReference>
<dbReference type="RefSeq" id="AP_004969.1">
    <property type="nucleotide sequence ID" value="AC_000188.1"/>
</dbReference>
<dbReference type="RefSeq" id="AP_004993.1">
    <property type="nucleotide sequence ID" value="AC_000188.1"/>
</dbReference>
<dbReference type="SMR" id="Q2MI59"/>
<dbReference type="FunCoup" id="Q2MI59">
    <property type="interactions" value="784"/>
</dbReference>
<dbReference type="STRING" id="4081.Q2MI59"/>
<dbReference type="PaxDb" id="4081-Solyc01g007630.2.1"/>
<dbReference type="KEGG" id="sly:16976780"/>
<dbReference type="KEGG" id="sly:3950470"/>
<dbReference type="eggNOG" id="KOG0438">
    <property type="taxonomic scope" value="Eukaryota"/>
</dbReference>
<dbReference type="InParanoid" id="Q2MI59"/>
<dbReference type="OrthoDB" id="1868197at2759"/>
<dbReference type="Proteomes" id="UP000004994">
    <property type="component" value="Chloroplast"/>
</dbReference>
<dbReference type="ExpressionAtlas" id="Q2MI59">
    <property type="expression patterns" value="baseline"/>
</dbReference>
<dbReference type="GO" id="GO:0009507">
    <property type="term" value="C:chloroplast"/>
    <property type="evidence" value="ECO:0007669"/>
    <property type="project" value="UniProtKB-SubCell"/>
</dbReference>
<dbReference type="GO" id="GO:0005762">
    <property type="term" value="C:mitochondrial large ribosomal subunit"/>
    <property type="evidence" value="ECO:0000318"/>
    <property type="project" value="GO_Central"/>
</dbReference>
<dbReference type="GO" id="GO:0003723">
    <property type="term" value="F:RNA binding"/>
    <property type="evidence" value="ECO:0000318"/>
    <property type="project" value="GO_Central"/>
</dbReference>
<dbReference type="GO" id="GO:0019843">
    <property type="term" value="F:rRNA binding"/>
    <property type="evidence" value="ECO:0007669"/>
    <property type="project" value="UniProtKB-UniRule"/>
</dbReference>
<dbReference type="GO" id="GO:0003735">
    <property type="term" value="F:structural constituent of ribosome"/>
    <property type="evidence" value="ECO:0000318"/>
    <property type="project" value="GO_Central"/>
</dbReference>
<dbReference type="GO" id="GO:0016740">
    <property type="term" value="F:transferase activity"/>
    <property type="evidence" value="ECO:0007669"/>
    <property type="project" value="InterPro"/>
</dbReference>
<dbReference type="GO" id="GO:0032543">
    <property type="term" value="P:mitochondrial translation"/>
    <property type="evidence" value="ECO:0000318"/>
    <property type="project" value="GO_Central"/>
</dbReference>
<dbReference type="FunFam" id="4.10.950.10:FF:000001">
    <property type="entry name" value="50S ribosomal protein L2"/>
    <property type="match status" value="1"/>
</dbReference>
<dbReference type="FunFam" id="2.30.30.30:FF:000008">
    <property type="entry name" value="50S ribosomal protein L2, chloroplastic"/>
    <property type="match status" value="1"/>
</dbReference>
<dbReference type="FunFam" id="2.40.50.140:FF:000029">
    <property type="entry name" value="50S ribosomal protein L2, chloroplastic"/>
    <property type="match status" value="1"/>
</dbReference>
<dbReference type="Gene3D" id="2.30.30.30">
    <property type="match status" value="1"/>
</dbReference>
<dbReference type="Gene3D" id="2.40.50.140">
    <property type="entry name" value="Nucleic acid-binding proteins"/>
    <property type="match status" value="1"/>
</dbReference>
<dbReference type="Gene3D" id="4.10.950.10">
    <property type="entry name" value="Ribosomal protein L2, domain 3"/>
    <property type="match status" value="1"/>
</dbReference>
<dbReference type="HAMAP" id="MF_01320_B">
    <property type="entry name" value="Ribosomal_uL2_B"/>
    <property type="match status" value="1"/>
</dbReference>
<dbReference type="InterPro" id="IPR012340">
    <property type="entry name" value="NA-bd_OB-fold"/>
</dbReference>
<dbReference type="InterPro" id="IPR014722">
    <property type="entry name" value="Rib_uL2_dom2"/>
</dbReference>
<dbReference type="InterPro" id="IPR002171">
    <property type="entry name" value="Ribosomal_uL2"/>
</dbReference>
<dbReference type="InterPro" id="IPR005880">
    <property type="entry name" value="Ribosomal_uL2_bac/org-type"/>
</dbReference>
<dbReference type="InterPro" id="IPR022669">
    <property type="entry name" value="Ribosomal_uL2_C"/>
</dbReference>
<dbReference type="InterPro" id="IPR022671">
    <property type="entry name" value="Ribosomal_uL2_CS"/>
</dbReference>
<dbReference type="InterPro" id="IPR014726">
    <property type="entry name" value="Ribosomal_uL2_dom3"/>
</dbReference>
<dbReference type="InterPro" id="IPR022666">
    <property type="entry name" value="Ribosomal_uL2_RNA-bd_dom"/>
</dbReference>
<dbReference type="InterPro" id="IPR008991">
    <property type="entry name" value="Translation_prot_SH3-like_sf"/>
</dbReference>
<dbReference type="NCBIfam" id="TIGR01171">
    <property type="entry name" value="rplB_bact"/>
    <property type="match status" value="1"/>
</dbReference>
<dbReference type="PANTHER" id="PTHR13691:SF5">
    <property type="entry name" value="LARGE RIBOSOMAL SUBUNIT PROTEIN UL2M"/>
    <property type="match status" value="1"/>
</dbReference>
<dbReference type="PANTHER" id="PTHR13691">
    <property type="entry name" value="RIBOSOMAL PROTEIN L2"/>
    <property type="match status" value="1"/>
</dbReference>
<dbReference type="Pfam" id="PF00181">
    <property type="entry name" value="Ribosomal_L2"/>
    <property type="match status" value="1"/>
</dbReference>
<dbReference type="Pfam" id="PF03947">
    <property type="entry name" value="Ribosomal_L2_C"/>
    <property type="match status" value="1"/>
</dbReference>
<dbReference type="PIRSF" id="PIRSF002158">
    <property type="entry name" value="Ribosomal_L2"/>
    <property type="match status" value="1"/>
</dbReference>
<dbReference type="SMART" id="SM01383">
    <property type="entry name" value="Ribosomal_L2"/>
    <property type="match status" value="1"/>
</dbReference>
<dbReference type="SMART" id="SM01382">
    <property type="entry name" value="Ribosomal_L2_C"/>
    <property type="match status" value="1"/>
</dbReference>
<dbReference type="SUPFAM" id="SSF50249">
    <property type="entry name" value="Nucleic acid-binding proteins"/>
    <property type="match status" value="1"/>
</dbReference>
<dbReference type="SUPFAM" id="SSF50104">
    <property type="entry name" value="Translation proteins SH3-like domain"/>
    <property type="match status" value="1"/>
</dbReference>
<dbReference type="PROSITE" id="PS00467">
    <property type="entry name" value="RIBOSOMAL_L2"/>
    <property type="match status" value="1"/>
</dbReference>
<evidence type="ECO:0000250" key="1"/>
<evidence type="ECO:0000255" key="2">
    <source>
        <dbReference type="HAMAP-Rule" id="MF_01320"/>
    </source>
</evidence>
<evidence type="ECO:0000256" key="3">
    <source>
        <dbReference type="SAM" id="MobiDB-lite"/>
    </source>
</evidence>
<evidence type="ECO:0000305" key="4"/>
<proteinExistence type="inferred from homology"/>
<accession>Q2MI59</accession>
<reference key="1">
    <citation type="journal article" date="2006" name="Theor. Appl. Genet.">
        <title>Complete chloroplast genome sequences of Solanum bulbocastanum, Solanum lycopersicum and comparative analyses with other Solanaceae genomes.</title>
        <authorList>
            <person name="Daniell H."/>
            <person name="Lee S.-B."/>
            <person name="Grevich J."/>
            <person name="Saski C."/>
            <person name="Quesada-Vargas T."/>
            <person name="Guda C."/>
            <person name="Tomkins J."/>
            <person name="Jansen R.K."/>
        </authorList>
    </citation>
    <scope>NUCLEOTIDE SEQUENCE [LARGE SCALE GENOMIC DNA]</scope>
    <source>
        <strain>cv. LA3023</strain>
    </source>
</reference>
<reference key="2">
    <citation type="journal article" date="2006" name="J. Mol. Evol.">
        <title>Sequence of the tomato chloroplast DNA and evolutionary comparison of solanaceous plastid genomes.</title>
        <authorList>
            <person name="Kahlau S."/>
            <person name="Aspinall S."/>
            <person name="Gray J.C."/>
            <person name="Bock R."/>
        </authorList>
    </citation>
    <scope>NUCLEOTIDE SEQUENCE [LARGE SCALE GENOMIC DNA]</scope>
    <source>
        <strain>cv. IPA-6</strain>
    </source>
</reference>
<organism>
    <name type="scientific">Solanum lycopersicum</name>
    <name type="common">Tomato</name>
    <name type="synonym">Lycopersicon esculentum</name>
    <dbReference type="NCBI Taxonomy" id="4081"/>
    <lineage>
        <taxon>Eukaryota</taxon>
        <taxon>Viridiplantae</taxon>
        <taxon>Streptophyta</taxon>
        <taxon>Embryophyta</taxon>
        <taxon>Tracheophyta</taxon>
        <taxon>Spermatophyta</taxon>
        <taxon>Magnoliopsida</taxon>
        <taxon>eudicotyledons</taxon>
        <taxon>Gunneridae</taxon>
        <taxon>Pentapetalae</taxon>
        <taxon>asterids</taxon>
        <taxon>lamiids</taxon>
        <taxon>Solanales</taxon>
        <taxon>Solanaceae</taxon>
        <taxon>Solanoideae</taxon>
        <taxon>Solaneae</taxon>
        <taxon>Solanum</taxon>
        <taxon>Solanum subgen. Lycopersicon</taxon>
    </lineage>
</organism>
<protein>
    <recommendedName>
        <fullName evidence="2">Large ribosomal subunit protein uL2cz/uL2cy</fullName>
    </recommendedName>
    <alternativeName>
        <fullName evidence="4">50S ribosomal protein L2, chloroplastic</fullName>
    </alternativeName>
</protein>
<keyword id="KW-0150">Chloroplast</keyword>
<keyword id="KW-0934">Plastid</keyword>
<keyword id="KW-1185">Reference proteome</keyword>
<keyword id="KW-0687">Ribonucleoprotein</keyword>
<keyword id="KW-0689">Ribosomal protein</keyword>
<gene>
    <name type="primary">rpl2-A</name>
</gene>
<gene>
    <name type="primary">rpl2-B</name>
</gene>
<feature type="chain" id="PRO_0000237279" description="Large ribosomal subunit protein uL2cz/uL2cy">
    <location>
        <begin position="1"/>
        <end position="274"/>
    </location>
</feature>
<feature type="region of interest" description="Disordered" evidence="3">
    <location>
        <begin position="1"/>
        <end position="25"/>
    </location>
</feature>
<feature type="region of interest" description="Disordered" evidence="3">
    <location>
        <begin position="224"/>
        <end position="274"/>
    </location>
</feature>
<feature type="compositionally biased region" description="Polar residues" evidence="3">
    <location>
        <begin position="7"/>
        <end position="25"/>
    </location>
</feature>
<sequence length="274" mass="30049">MAIHLYKTSTPSTRNGTVDSQVKSNPRNNLIYGQRRCGKGRNARGIITARHRGGGHKRLYRKIDFRRNEKDIYGRIVTIEYDPNRNAYICLIHYGDGEKRYILHPRGAIIGDTIVSGTEVPIKMGNALPLTDMPLGTAIHNIEITLGKGGQLARAAGAVAKLIAKEGKSATLKLPSGEVRLISKNCSATVGQVGNVGVNQKSLGRAGSKRWLGKRPVVRGVVMNPVDHPHGGGEGRAPIGRKKPTTPWGYPALGRRSRKRNKYSDNLILRRRSK</sequence>